<organism>
    <name type="scientific">Shewanella sp. (strain W3-18-1)</name>
    <dbReference type="NCBI Taxonomy" id="351745"/>
    <lineage>
        <taxon>Bacteria</taxon>
        <taxon>Pseudomonadati</taxon>
        <taxon>Pseudomonadota</taxon>
        <taxon>Gammaproteobacteria</taxon>
        <taxon>Alteromonadales</taxon>
        <taxon>Shewanellaceae</taxon>
        <taxon>Shewanella</taxon>
    </lineage>
</organism>
<keyword id="KW-0687">Ribonucleoprotein</keyword>
<keyword id="KW-0689">Ribosomal protein</keyword>
<keyword id="KW-0694">RNA-binding</keyword>
<keyword id="KW-0699">rRNA-binding</keyword>
<evidence type="ECO:0000255" key="1">
    <source>
        <dbReference type="HAMAP-Rule" id="MF_01341"/>
    </source>
</evidence>
<evidence type="ECO:0000256" key="2">
    <source>
        <dbReference type="SAM" id="MobiDB-lite"/>
    </source>
</evidence>
<evidence type="ECO:0000305" key="3"/>
<name>RL15_SHESW</name>
<accession>A1RED3</accession>
<comment type="function">
    <text evidence="1">Binds to the 23S rRNA.</text>
</comment>
<comment type="subunit">
    <text evidence="1">Part of the 50S ribosomal subunit.</text>
</comment>
<comment type="similarity">
    <text evidence="1">Belongs to the universal ribosomal protein uL15 family.</text>
</comment>
<protein>
    <recommendedName>
        <fullName evidence="1">Large ribosomal subunit protein uL15</fullName>
    </recommendedName>
    <alternativeName>
        <fullName evidence="3">50S ribosomal protein L15</fullName>
    </alternativeName>
</protein>
<reference key="1">
    <citation type="submission" date="2006-12" db="EMBL/GenBank/DDBJ databases">
        <title>Complete sequence of Shewanella sp. W3-18-1.</title>
        <authorList>
            <consortium name="US DOE Joint Genome Institute"/>
            <person name="Copeland A."/>
            <person name="Lucas S."/>
            <person name="Lapidus A."/>
            <person name="Barry K."/>
            <person name="Detter J.C."/>
            <person name="Glavina del Rio T."/>
            <person name="Hammon N."/>
            <person name="Israni S."/>
            <person name="Dalin E."/>
            <person name="Tice H."/>
            <person name="Pitluck S."/>
            <person name="Chain P."/>
            <person name="Malfatti S."/>
            <person name="Shin M."/>
            <person name="Vergez L."/>
            <person name="Schmutz J."/>
            <person name="Larimer F."/>
            <person name="Land M."/>
            <person name="Hauser L."/>
            <person name="Kyrpides N."/>
            <person name="Lykidis A."/>
            <person name="Tiedje J."/>
            <person name="Richardson P."/>
        </authorList>
    </citation>
    <scope>NUCLEOTIDE SEQUENCE [LARGE SCALE GENOMIC DNA]</scope>
    <source>
        <strain>W3-18-1</strain>
    </source>
</reference>
<dbReference type="EMBL" id="CP000503">
    <property type="protein sequence ID" value="ABM23028.1"/>
    <property type="molecule type" value="Genomic_DNA"/>
</dbReference>
<dbReference type="RefSeq" id="WP_006083581.1">
    <property type="nucleotide sequence ID" value="NC_008750.1"/>
</dbReference>
<dbReference type="SMR" id="A1RED3"/>
<dbReference type="GeneID" id="67441779"/>
<dbReference type="KEGG" id="shw:Sputw3181_0175"/>
<dbReference type="HOGENOM" id="CLU_055188_4_2_6"/>
<dbReference type="Proteomes" id="UP000002597">
    <property type="component" value="Chromosome"/>
</dbReference>
<dbReference type="GO" id="GO:0022625">
    <property type="term" value="C:cytosolic large ribosomal subunit"/>
    <property type="evidence" value="ECO:0007669"/>
    <property type="project" value="TreeGrafter"/>
</dbReference>
<dbReference type="GO" id="GO:0019843">
    <property type="term" value="F:rRNA binding"/>
    <property type="evidence" value="ECO:0007669"/>
    <property type="project" value="UniProtKB-UniRule"/>
</dbReference>
<dbReference type="GO" id="GO:0003735">
    <property type="term" value="F:structural constituent of ribosome"/>
    <property type="evidence" value="ECO:0007669"/>
    <property type="project" value="InterPro"/>
</dbReference>
<dbReference type="GO" id="GO:0006412">
    <property type="term" value="P:translation"/>
    <property type="evidence" value="ECO:0007669"/>
    <property type="project" value="UniProtKB-UniRule"/>
</dbReference>
<dbReference type="FunFam" id="3.100.10.10:FF:000003">
    <property type="entry name" value="50S ribosomal protein L15"/>
    <property type="match status" value="1"/>
</dbReference>
<dbReference type="Gene3D" id="3.100.10.10">
    <property type="match status" value="1"/>
</dbReference>
<dbReference type="HAMAP" id="MF_01341">
    <property type="entry name" value="Ribosomal_uL15"/>
    <property type="match status" value="1"/>
</dbReference>
<dbReference type="InterPro" id="IPR030878">
    <property type="entry name" value="Ribosomal_uL15"/>
</dbReference>
<dbReference type="InterPro" id="IPR021131">
    <property type="entry name" value="Ribosomal_uL15/eL18"/>
</dbReference>
<dbReference type="InterPro" id="IPR036227">
    <property type="entry name" value="Ribosomal_uL15/eL18_sf"/>
</dbReference>
<dbReference type="InterPro" id="IPR005749">
    <property type="entry name" value="Ribosomal_uL15_bac-type"/>
</dbReference>
<dbReference type="InterPro" id="IPR001196">
    <property type="entry name" value="Ribosomal_uL15_CS"/>
</dbReference>
<dbReference type="NCBIfam" id="TIGR01071">
    <property type="entry name" value="rplO_bact"/>
    <property type="match status" value="1"/>
</dbReference>
<dbReference type="PANTHER" id="PTHR12934">
    <property type="entry name" value="50S RIBOSOMAL PROTEIN L15"/>
    <property type="match status" value="1"/>
</dbReference>
<dbReference type="PANTHER" id="PTHR12934:SF11">
    <property type="entry name" value="LARGE RIBOSOMAL SUBUNIT PROTEIN UL15M"/>
    <property type="match status" value="1"/>
</dbReference>
<dbReference type="Pfam" id="PF00828">
    <property type="entry name" value="Ribosomal_L27A"/>
    <property type="match status" value="1"/>
</dbReference>
<dbReference type="SUPFAM" id="SSF52080">
    <property type="entry name" value="Ribosomal proteins L15p and L18e"/>
    <property type="match status" value="1"/>
</dbReference>
<dbReference type="PROSITE" id="PS00475">
    <property type="entry name" value="RIBOSOMAL_L15"/>
    <property type="match status" value="1"/>
</dbReference>
<gene>
    <name evidence="1" type="primary">rplO</name>
    <name type="ordered locus">Sputw3181_0175</name>
</gene>
<proteinExistence type="inferred from homology"/>
<feature type="chain" id="PRO_1000054544" description="Large ribosomal subunit protein uL15">
    <location>
        <begin position="1"/>
        <end position="144"/>
    </location>
</feature>
<feature type="region of interest" description="Disordered" evidence="2">
    <location>
        <begin position="1"/>
        <end position="54"/>
    </location>
</feature>
<feature type="compositionally biased region" description="Gly residues" evidence="2">
    <location>
        <begin position="21"/>
        <end position="31"/>
    </location>
</feature>
<feature type="compositionally biased region" description="Gly residues" evidence="2">
    <location>
        <begin position="42"/>
        <end position="52"/>
    </location>
</feature>
<sequence>MRLNTLSPAAGSKHAPKRVGRGMGSGLGKTAGRGHKGQKSRSGGGVRPGFEGGQMPLKIRLPKFGFTSRRAMVTAEVRVLELAKVNGDVIDLNALKDANVITRNIQFAKIVLSGTIERPVTVKGLKVTKGARAAIEAAGGKIEE</sequence>